<gene>
    <name type="primary">HOX17</name>
    <name type="ordered locus">Os04g0548700</name>
    <name type="ordered locus">LOC_Os04g46350</name>
    <name type="ORF">OSJNBa0065H10.13</name>
</gene>
<protein>
    <recommendedName>
        <fullName>Homeobox-leucine zipper protein HOX17</fullName>
    </recommendedName>
    <alternativeName>
        <fullName>HD-ZIP protein HOX17</fullName>
    </alternativeName>
    <alternativeName>
        <fullName>Homeodomain transcription factor HOX17</fullName>
    </alternativeName>
    <alternativeName>
        <fullName>OsHox17</fullName>
    </alternativeName>
</protein>
<dbReference type="EMBL" id="AL731613">
    <property type="protein sequence ID" value="CAE05141.1"/>
    <property type="molecule type" value="Genomic_DNA"/>
</dbReference>
<dbReference type="EMBL" id="AP008210">
    <property type="protein sequence ID" value="BAF15395.1"/>
    <property type="molecule type" value="Genomic_DNA"/>
</dbReference>
<dbReference type="EMBL" id="AP014960">
    <property type="protein sequence ID" value="BAS90360.1"/>
    <property type="molecule type" value="Genomic_DNA"/>
</dbReference>
<dbReference type="EMBL" id="AK122006">
    <property type="protein sequence ID" value="BAH00751.1"/>
    <property type="molecule type" value="mRNA"/>
</dbReference>
<dbReference type="RefSeq" id="XP_015634538.1">
    <property type="nucleotide sequence ID" value="XM_015779052.1"/>
</dbReference>
<dbReference type="SMR" id="Q0JB92"/>
<dbReference type="FunCoup" id="Q0JB92">
    <property type="interactions" value="3"/>
</dbReference>
<dbReference type="STRING" id="39947.Q0JB92"/>
<dbReference type="PaxDb" id="39947-Q0JB92"/>
<dbReference type="EnsemblPlants" id="Os04t0548700-01">
    <property type="protein sequence ID" value="Os04t0548700-01"/>
    <property type="gene ID" value="Os04g0548700"/>
</dbReference>
<dbReference type="Gramene" id="Os04t0548700-01">
    <property type="protein sequence ID" value="Os04t0548700-01"/>
    <property type="gene ID" value="Os04g0548700"/>
</dbReference>
<dbReference type="KEGG" id="dosa:Os04g0548700"/>
<dbReference type="eggNOG" id="KOG0483">
    <property type="taxonomic scope" value="Eukaryota"/>
</dbReference>
<dbReference type="HOGENOM" id="CLU_049516_4_0_1"/>
<dbReference type="InParanoid" id="Q0JB92"/>
<dbReference type="OMA" id="PERRFME"/>
<dbReference type="OrthoDB" id="6159439at2759"/>
<dbReference type="Proteomes" id="UP000000763">
    <property type="component" value="Chromosome 4"/>
</dbReference>
<dbReference type="Proteomes" id="UP000059680">
    <property type="component" value="Chromosome 4"/>
</dbReference>
<dbReference type="GO" id="GO:0005634">
    <property type="term" value="C:nucleus"/>
    <property type="evidence" value="ECO:0007669"/>
    <property type="project" value="UniProtKB-SubCell"/>
</dbReference>
<dbReference type="GO" id="GO:0000981">
    <property type="term" value="F:DNA-binding transcription factor activity, RNA polymerase II-specific"/>
    <property type="evidence" value="ECO:0007669"/>
    <property type="project" value="InterPro"/>
</dbReference>
<dbReference type="GO" id="GO:0043565">
    <property type="term" value="F:sequence-specific DNA binding"/>
    <property type="evidence" value="ECO:0007669"/>
    <property type="project" value="InterPro"/>
</dbReference>
<dbReference type="CDD" id="cd00086">
    <property type="entry name" value="homeodomain"/>
    <property type="match status" value="1"/>
</dbReference>
<dbReference type="FunFam" id="1.10.10.60:FF:000577">
    <property type="entry name" value="Homeobox-leucine zipper protein 18"/>
    <property type="match status" value="1"/>
</dbReference>
<dbReference type="Gene3D" id="1.10.10.60">
    <property type="entry name" value="Homeodomain-like"/>
    <property type="match status" value="1"/>
</dbReference>
<dbReference type="InterPro" id="IPR001356">
    <property type="entry name" value="HD"/>
</dbReference>
<dbReference type="InterPro" id="IPR050762">
    <property type="entry name" value="HD-ZIP_Homeobox_LZ_Class_II"/>
</dbReference>
<dbReference type="InterPro" id="IPR017970">
    <property type="entry name" value="Homeobox_CS"/>
</dbReference>
<dbReference type="InterPro" id="IPR009057">
    <property type="entry name" value="Homeodomain-like_sf"/>
</dbReference>
<dbReference type="InterPro" id="IPR000047">
    <property type="entry name" value="HTH_motif"/>
</dbReference>
<dbReference type="InterPro" id="IPR003106">
    <property type="entry name" value="Leu_zip_homeo"/>
</dbReference>
<dbReference type="PANTHER" id="PTHR45714">
    <property type="entry name" value="HOMEOBOX-LEUCINE ZIPPER PROTEIN HAT14"/>
    <property type="match status" value="1"/>
</dbReference>
<dbReference type="PANTHER" id="PTHR45714:SF16">
    <property type="entry name" value="HOMEOBOX-LEUCINE ZIPPER PROTEIN HAT2"/>
    <property type="match status" value="1"/>
</dbReference>
<dbReference type="Pfam" id="PF02183">
    <property type="entry name" value="HALZ"/>
    <property type="match status" value="1"/>
</dbReference>
<dbReference type="Pfam" id="PF00046">
    <property type="entry name" value="Homeodomain"/>
    <property type="match status" value="1"/>
</dbReference>
<dbReference type="PRINTS" id="PR00031">
    <property type="entry name" value="HTHREPRESSR"/>
</dbReference>
<dbReference type="SMART" id="SM00340">
    <property type="entry name" value="HALZ"/>
    <property type="match status" value="1"/>
</dbReference>
<dbReference type="SMART" id="SM00389">
    <property type="entry name" value="HOX"/>
    <property type="match status" value="1"/>
</dbReference>
<dbReference type="SUPFAM" id="SSF46689">
    <property type="entry name" value="Homeodomain-like"/>
    <property type="match status" value="1"/>
</dbReference>
<dbReference type="PROSITE" id="PS00027">
    <property type="entry name" value="HOMEOBOX_1"/>
    <property type="match status" value="1"/>
</dbReference>
<dbReference type="PROSITE" id="PS50071">
    <property type="entry name" value="HOMEOBOX_2"/>
    <property type="match status" value="1"/>
</dbReference>
<keyword id="KW-0238">DNA-binding</keyword>
<keyword id="KW-0371">Homeobox</keyword>
<keyword id="KW-0539">Nucleus</keyword>
<keyword id="KW-1185">Reference proteome</keyword>
<keyword id="KW-0804">Transcription</keyword>
<keyword id="KW-0805">Transcription regulation</keyword>
<organism>
    <name type="scientific">Oryza sativa subsp. japonica</name>
    <name type="common">Rice</name>
    <dbReference type="NCBI Taxonomy" id="39947"/>
    <lineage>
        <taxon>Eukaryota</taxon>
        <taxon>Viridiplantae</taxon>
        <taxon>Streptophyta</taxon>
        <taxon>Embryophyta</taxon>
        <taxon>Tracheophyta</taxon>
        <taxon>Spermatophyta</taxon>
        <taxon>Magnoliopsida</taxon>
        <taxon>Liliopsida</taxon>
        <taxon>Poales</taxon>
        <taxon>Poaceae</taxon>
        <taxon>BOP clade</taxon>
        <taxon>Oryzoideae</taxon>
        <taxon>Oryzeae</taxon>
        <taxon>Oryzinae</taxon>
        <taxon>Oryza</taxon>
        <taxon>Oryza sativa</taxon>
    </lineage>
</organism>
<comment type="function">
    <text evidence="1">Probable transcription factor.</text>
</comment>
<comment type="subcellular location">
    <subcellularLocation>
        <location evidence="5">Nucleus</location>
    </subcellularLocation>
</comment>
<comment type="tissue specificity">
    <text evidence="4">Expressed in seedlings, roots, stems, leaf sheaths and blades and panicles.</text>
</comment>
<comment type="similarity">
    <text evidence="5">Belongs to the HD-ZIP homeobox family. Class II subfamily.</text>
</comment>
<feature type="chain" id="PRO_0000331707" description="Homeobox-leucine zipper protein HOX17">
    <location>
        <begin position="1"/>
        <end position="247"/>
    </location>
</feature>
<feature type="DNA-binding region" description="Homeobox" evidence="2">
    <location>
        <begin position="79"/>
        <end position="138"/>
    </location>
</feature>
<feature type="region of interest" description="Disordered" evidence="3">
    <location>
        <begin position="58"/>
        <end position="81"/>
    </location>
</feature>
<feature type="region of interest" description="Leucine-zipper">
    <location>
        <begin position="137"/>
        <end position="182"/>
    </location>
</feature>
<name>HOX17_ORYSJ</name>
<proteinExistence type="evidence at transcript level"/>
<accession>Q0JB92</accession>
<accession>B7F803</accession>
<accession>Q5CAH0</accession>
<reference key="1">
    <citation type="journal article" date="2002" name="Nature">
        <title>Sequence and analysis of rice chromosome 4.</title>
        <authorList>
            <person name="Feng Q."/>
            <person name="Zhang Y."/>
            <person name="Hao P."/>
            <person name="Wang S."/>
            <person name="Fu G."/>
            <person name="Huang Y."/>
            <person name="Li Y."/>
            <person name="Zhu J."/>
            <person name="Liu Y."/>
            <person name="Hu X."/>
            <person name="Jia P."/>
            <person name="Zhang Y."/>
            <person name="Zhao Q."/>
            <person name="Ying K."/>
            <person name="Yu S."/>
            <person name="Tang Y."/>
            <person name="Weng Q."/>
            <person name="Zhang L."/>
            <person name="Lu Y."/>
            <person name="Mu J."/>
            <person name="Lu Y."/>
            <person name="Zhang L.S."/>
            <person name="Yu Z."/>
            <person name="Fan D."/>
            <person name="Liu X."/>
            <person name="Lu T."/>
            <person name="Li C."/>
            <person name="Wu Y."/>
            <person name="Sun T."/>
            <person name="Lei H."/>
            <person name="Li T."/>
            <person name="Hu H."/>
            <person name="Guan J."/>
            <person name="Wu M."/>
            <person name="Zhang R."/>
            <person name="Zhou B."/>
            <person name="Chen Z."/>
            <person name="Chen L."/>
            <person name="Jin Z."/>
            <person name="Wang R."/>
            <person name="Yin H."/>
            <person name="Cai Z."/>
            <person name="Ren S."/>
            <person name="Lv G."/>
            <person name="Gu W."/>
            <person name="Zhu G."/>
            <person name="Tu Y."/>
            <person name="Jia J."/>
            <person name="Zhang Y."/>
            <person name="Chen J."/>
            <person name="Kang H."/>
            <person name="Chen X."/>
            <person name="Shao C."/>
            <person name="Sun Y."/>
            <person name="Hu Q."/>
            <person name="Zhang X."/>
            <person name="Zhang W."/>
            <person name="Wang L."/>
            <person name="Ding C."/>
            <person name="Sheng H."/>
            <person name="Gu J."/>
            <person name="Chen S."/>
            <person name="Ni L."/>
            <person name="Zhu F."/>
            <person name="Chen W."/>
            <person name="Lan L."/>
            <person name="Lai Y."/>
            <person name="Cheng Z."/>
            <person name="Gu M."/>
            <person name="Jiang J."/>
            <person name="Li J."/>
            <person name="Hong G."/>
            <person name="Xue Y."/>
            <person name="Han B."/>
        </authorList>
    </citation>
    <scope>NUCLEOTIDE SEQUENCE [LARGE SCALE GENOMIC DNA]</scope>
    <source>
        <strain>cv. Nipponbare</strain>
    </source>
</reference>
<reference key="2">
    <citation type="journal article" date="2005" name="Nature">
        <title>The map-based sequence of the rice genome.</title>
        <authorList>
            <consortium name="International rice genome sequencing project (IRGSP)"/>
        </authorList>
    </citation>
    <scope>NUCLEOTIDE SEQUENCE [LARGE SCALE GENOMIC DNA]</scope>
    <source>
        <strain>cv. Nipponbare</strain>
    </source>
</reference>
<reference key="3">
    <citation type="journal article" date="2008" name="Nucleic Acids Res.">
        <title>The rice annotation project database (RAP-DB): 2008 update.</title>
        <authorList>
            <consortium name="The rice annotation project (RAP)"/>
        </authorList>
    </citation>
    <scope>GENOME REANNOTATION</scope>
    <source>
        <strain>cv. Nipponbare</strain>
    </source>
</reference>
<reference key="4">
    <citation type="journal article" date="2013" name="Rice">
        <title>Improvement of the Oryza sativa Nipponbare reference genome using next generation sequence and optical map data.</title>
        <authorList>
            <person name="Kawahara Y."/>
            <person name="de la Bastide M."/>
            <person name="Hamilton J.P."/>
            <person name="Kanamori H."/>
            <person name="McCombie W.R."/>
            <person name="Ouyang S."/>
            <person name="Schwartz D.C."/>
            <person name="Tanaka T."/>
            <person name="Wu J."/>
            <person name="Zhou S."/>
            <person name="Childs K.L."/>
            <person name="Davidson R.M."/>
            <person name="Lin H."/>
            <person name="Quesada-Ocampo L."/>
            <person name="Vaillancourt B."/>
            <person name="Sakai H."/>
            <person name="Lee S.S."/>
            <person name="Kim J."/>
            <person name="Numa H."/>
            <person name="Itoh T."/>
            <person name="Buell C.R."/>
            <person name="Matsumoto T."/>
        </authorList>
    </citation>
    <scope>GENOME REANNOTATION</scope>
    <source>
        <strain>cv. Nipponbare</strain>
    </source>
</reference>
<reference key="5">
    <citation type="journal article" date="2003" name="Science">
        <title>Collection, mapping, and annotation of over 28,000 cDNA clones from japonica rice.</title>
        <authorList>
            <consortium name="The rice full-length cDNA consortium"/>
        </authorList>
    </citation>
    <scope>NUCLEOTIDE SEQUENCE [LARGE SCALE MRNA]</scope>
    <source>
        <strain>cv. Nipponbare</strain>
    </source>
</reference>
<reference key="6">
    <citation type="journal article" date="2008" name="Plant Mol. Biol.">
        <title>A genome-wide survey of HD-Zip genes in rice and analysis of drought-responsive family members.</title>
        <authorList>
            <person name="Agalou A."/>
            <person name="Purwantomo S."/>
            <person name="Oevernaes E."/>
            <person name="Johannesson H."/>
            <person name="Zhu X."/>
            <person name="Estiati A."/>
            <person name="de Kam R.J."/>
            <person name="Engstroem P."/>
            <person name="Slamet-Loedin I.H."/>
            <person name="Zhu Z."/>
            <person name="Wang M."/>
            <person name="Xiong L."/>
            <person name="Meijer A.H."/>
            <person name="Ouwerkerk P.B.F."/>
        </authorList>
    </citation>
    <scope>TISSUE SPECIFICITY</scope>
    <scope>GENE FAMILY</scope>
    <scope>NOMENCLATURE</scope>
</reference>
<sequence length="247" mass="27291">MMERAEDLRLSLSLSSPLIAPRTHHVAMLFHAPPEKRFLEMPLLPAAKRSEVVAAEEERAGLRGGGGSDEEDGGCGIDGSRKKLRLSKDQSAVLEDSFREHPTLNPRQKATLAQQLGLRPRQVEVWFQNRRARTKLKQTEVDCEFLKRCCETLTEENRRLQKEVQELRALKLVSPHLYMNMSPPTTLTMCPSCERVSNTNNNSSAAAAADRRGIRTTTAAGGGSVVDTAADGGILCHRPIAVRPQQS</sequence>
<evidence type="ECO:0000250" key="1"/>
<evidence type="ECO:0000255" key="2">
    <source>
        <dbReference type="PROSITE-ProRule" id="PRU00108"/>
    </source>
</evidence>
<evidence type="ECO:0000256" key="3">
    <source>
        <dbReference type="SAM" id="MobiDB-lite"/>
    </source>
</evidence>
<evidence type="ECO:0000269" key="4">
    <source>
    </source>
</evidence>
<evidence type="ECO:0000305" key="5"/>